<comment type="function">
    <text evidence="1">Pyrophosphatase that catalyzes the hydrolysis of nucleoside triphosphates to their monophosphate derivatives, with a high preference for the non-canonical purine nucleotides XTP (xanthosine triphosphate), dITP (deoxyinosine triphosphate) and ITP. Seems to function as a house-cleaning enzyme that removes non-canonical purine nucleotides from the nucleotide pool, thus preventing their incorporation into DNA/RNA and avoiding chromosomal lesions.</text>
</comment>
<comment type="catalytic activity">
    <reaction evidence="1">
        <text>XTP + H2O = XMP + diphosphate + H(+)</text>
        <dbReference type="Rhea" id="RHEA:28610"/>
        <dbReference type="ChEBI" id="CHEBI:15377"/>
        <dbReference type="ChEBI" id="CHEBI:15378"/>
        <dbReference type="ChEBI" id="CHEBI:33019"/>
        <dbReference type="ChEBI" id="CHEBI:57464"/>
        <dbReference type="ChEBI" id="CHEBI:61314"/>
        <dbReference type="EC" id="3.6.1.66"/>
    </reaction>
</comment>
<comment type="catalytic activity">
    <reaction evidence="1">
        <text>dITP + H2O = dIMP + diphosphate + H(+)</text>
        <dbReference type="Rhea" id="RHEA:28342"/>
        <dbReference type="ChEBI" id="CHEBI:15377"/>
        <dbReference type="ChEBI" id="CHEBI:15378"/>
        <dbReference type="ChEBI" id="CHEBI:33019"/>
        <dbReference type="ChEBI" id="CHEBI:61194"/>
        <dbReference type="ChEBI" id="CHEBI:61382"/>
        <dbReference type="EC" id="3.6.1.66"/>
    </reaction>
</comment>
<comment type="catalytic activity">
    <reaction evidence="1">
        <text>ITP + H2O = IMP + diphosphate + H(+)</text>
        <dbReference type="Rhea" id="RHEA:29399"/>
        <dbReference type="ChEBI" id="CHEBI:15377"/>
        <dbReference type="ChEBI" id="CHEBI:15378"/>
        <dbReference type="ChEBI" id="CHEBI:33019"/>
        <dbReference type="ChEBI" id="CHEBI:58053"/>
        <dbReference type="ChEBI" id="CHEBI:61402"/>
        <dbReference type="EC" id="3.6.1.66"/>
    </reaction>
</comment>
<comment type="cofactor">
    <cofactor evidence="1">
        <name>Mg(2+)</name>
        <dbReference type="ChEBI" id="CHEBI:18420"/>
    </cofactor>
    <text evidence="1">Binds 1 Mg(2+) ion per subunit.</text>
</comment>
<comment type="subunit">
    <text evidence="1">Homodimer.</text>
</comment>
<comment type="similarity">
    <text evidence="1">Belongs to the HAM1 NTPase family.</text>
</comment>
<sequence>MKTVLLATNNENKVNEIKDILCELNLKVVSLKEVGINVEVEEDELTFMGNALKKALTLYNMIDDKKYMVLADDSGLSVDVLGGAPGVFSARYAGEHGNSKANNEKLLEDMKGLKNRKGKFICAMALVIDKDNIIKVQGEVEGSIGYEEKGDNGFGYDPLFFVSKYNMTFAEMDKDIKNSISHRRDALNKIKEKLKSYIEDK</sequence>
<dbReference type="EC" id="3.6.1.66" evidence="1"/>
<dbReference type="EMBL" id="AE015927">
    <property type="protein sequence ID" value="AAO36861.1"/>
    <property type="molecule type" value="Genomic_DNA"/>
</dbReference>
<dbReference type="RefSeq" id="WP_011100522.1">
    <property type="nucleotide sequence ID" value="NC_004557.1"/>
</dbReference>
<dbReference type="SMR" id="Q891I4"/>
<dbReference type="STRING" id="212717.CTC_02388"/>
<dbReference type="GeneID" id="24254998"/>
<dbReference type="KEGG" id="ctc:CTC_02388"/>
<dbReference type="HOGENOM" id="CLU_082080_0_2_9"/>
<dbReference type="OrthoDB" id="9807456at2"/>
<dbReference type="Proteomes" id="UP000001412">
    <property type="component" value="Chromosome"/>
</dbReference>
<dbReference type="GO" id="GO:0005829">
    <property type="term" value="C:cytosol"/>
    <property type="evidence" value="ECO:0007669"/>
    <property type="project" value="TreeGrafter"/>
</dbReference>
<dbReference type="GO" id="GO:0035870">
    <property type="term" value="F:dITP diphosphatase activity"/>
    <property type="evidence" value="ECO:0007669"/>
    <property type="project" value="RHEA"/>
</dbReference>
<dbReference type="GO" id="GO:0036220">
    <property type="term" value="F:ITP diphosphatase activity"/>
    <property type="evidence" value="ECO:0007669"/>
    <property type="project" value="UniProtKB-EC"/>
</dbReference>
<dbReference type="GO" id="GO:0046872">
    <property type="term" value="F:metal ion binding"/>
    <property type="evidence" value="ECO:0007669"/>
    <property type="project" value="UniProtKB-KW"/>
</dbReference>
<dbReference type="GO" id="GO:0000166">
    <property type="term" value="F:nucleotide binding"/>
    <property type="evidence" value="ECO:0007669"/>
    <property type="project" value="UniProtKB-KW"/>
</dbReference>
<dbReference type="GO" id="GO:0017111">
    <property type="term" value="F:ribonucleoside triphosphate phosphatase activity"/>
    <property type="evidence" value="ECO:0007669"/>
    <property type="project" value="InterPro"/>
</dbReference>
<dbReference type="GO" id="GO:0036222">
    <property type="term" value="F:XTP diphosphatase activity"/>
    <property type="evidence" value="ECO:0007669"/>
    <property type="project" value="RHEA"/>
</dbReference>
<dbReference type="GO" id="GO:0009117">
    <property type="term" value="P:nucleotide metabolic process"/>
    <property type="evidence" value="ECO:0007669"/>
    <property type="project" value="UniProtKB-KW"/>
</dbReference>
<dbReference type="GO" id="GO:0009146">
    <property type="term" value="P:purine nucleoside triphosphate catabolic process"/>
    <property type="evidence" value="ECO:0007669"/>
    <property type="project" value="UniProtKB-UniRule"/>
</dbReference>
<dbReference type="CDD" id="cd00515">
    <property type="entry name" value="HAM1"/>
    <property type="match status" value="1"/>
</dbReference>
<dbReference type="FunFam" id="3.90.950.10:FF:000001">
    <property type="entry name" value="dITP/XTP pyrophosphatase"/>
    <property type="match status" value="1"/>
</dbReference>
<dbReference type="Gene3D" id="3.90.950.10">
    <property type="match status" value="1"/>
</dbReference>
<dbReference type="HAMAP" id="MF_01405">
    <property type="entry name" value="Non_canon_purine_NTPase"/>
    <property type="match status" value="1"/>
</dbReference>
<dbReference type="InterPro" id="IPR020922">
    <property type="entry name" value="dITP/XTP_pyrophosphatase"/>
</dbReference>
<dbReference type="InterPro" id="IPR029001">
    <property type="entry name" value="ITPase-like_fam"/>
</dbReference>
<dbReference type="InterPro" id="IPR002637">
    <property type="entry name" value="RdgB/HAM1"/>
</dbReference>
<dbReference type="NCBIfam" id="TIGR00042">
    <property type="entry name" value="RdgB/HAM1 family non-canonical purine NTP pyrophosphatase"/>
    <property type="match status" value="1"/>
</dbReference>
<dbReference type="PANTHER" id="PTHR11067:SF9">
    <property type="entry name" value="INOSINE TRIPHOSPHATE PYROPHOSPHATASE"/>
    <property type="match status" value="1"/>
</dbReference>
<dbReference type="PANTHER" id="PTHR11067">
    <property type="entry name" value="INOSINE TRIPHOSPHATE PYROPHOSPHATASE/HAM1 PROTEIN"/>
    <property type="match status" value="1"/>
</dbReference>
<dbReference type="Pfam" id="PF01725">
    <property type="entry name" value="Ham1p_like"/>
    <property type="match status" value="1"/>
</dbReference>
<dbReference type="SUPFAM" id="SSF52972">
    <property type="entry name" value="ITPase-like"/>
    <property type="match status" value="1"/>
</dbReference>
<evidence type="ECO:0000255" key="1">
    <source>
        <dbReference type="HAMAP-Rule" id="MF_01405"/>
    </source>
</evidence>
<gene>
    <name type="ordered locus">CTC_02388</name>
</gene>
<protein>
    <recommendedName>
        <fullName evidence="1">dITP/XTP pyrophosphatase</fullName>
        <ecNumber evidence="1">3.6.1.66</ecNumber>
    </recommendedName>
    <alternativeName>
        <fullName evidence="1">Non-canonical purine NTP pyrophosphatase</fullName>
    </alternativeName>
    <alternativeName>
        <fullName evidence="1">Non-standard purine NTP pyrophosphatase</fullName>
    </alternativeName>
    <alternativeName>
        <fullName evidence="1">Nucleoside-triphosphate diphosphatase</fullName>
    </alternativeName>
    <alternativeName>
        <fullName evidence="1">Nucleoside-triphosphate pyrophosphatase</fullName>
        <shortName evidence="1">NTPase</shortName>
    </alternativeName>
</protein>
<organism>
    <name type="scientific">Clostridium tetani (strain Massachusetts / E88)</name>
    <dbReference type="NCBI Taxonomy" id="212717"/>
    <lineage>
        <taxon>Bacteria</taxon>
        <taxon>Bacillati</taxon>
        <taxon>Bacillota</taxon>
        <taxon>Clostridia</taxon>
        <taxon>Eubacteriales</taxon>
        <taxon>Clostridiaceae</taxon>
        <taxon>Clostridium</taxon>
    </lineage>
</organism>
<keyword id="KW-0378">Hydrolase</keyword>
<keyword id="KW-0460">Magnesium</keyword>
<keyword id="KW-0479">Metal-binding</keyword>
<keyword id="KW-0546">Nucleotide metabolism</keyword>
<keyword id="KW-0547">Nucleotide-binding</keyword>
<keyword id="KW-1185">Reference proteome</keyword>
<feature type="chain" id="PRO_0000178156" description="dITP/XTP pyrophosphatase">
    <location>
        <begin position="1"/>
        <end position="201"/>
    </location>
</feature>
<feature type="active site" description="Proton acceptor" evidence="1">
    <location>
        <position position="73"/>
    </location>
</feature>
<feature type="binding site" evidence="1">
    <location>
        <begin position="8"/>
        <end position="13"/>
    </location>
    <ligand>
        <name>substrate</name>
    </ligand>
</feature>
<feature type="binding site" evidence="1">
    <location>
        <position position="41"/>
    </location>
    <ligand>
        <name>Mg(2+)</name>
        <dbReference type="ChEBI" id="CHEBI:18420"/>
    </ligand>
</feature>
<feature type="binding site" evidence="1">
    <location>
        <position position="73"/>
    </location>
    <ligand>
        <name>Mg(2+)</name>
        <dbReference type="ChEBI" id="CHEBI:18420"/>
    </ligand>
</feature>
<feature type="binding site" evidence="1">
    <location>
        <position position="74"/>
    </location>
    <ligand>
        <name>substrate</name>
    </ligand>
</feature>
<feature type="binding site" evidence="1">
    <location>
        <begin position="154"/>
        <end position="157"/>
    </location>
    <ligand>
        <name>substrate</name>
    </ligand>
</feature>
<feature type="binding site" evidence="1">
    <location>
        <position position="177"/>
    </location>
    <ligand>
        <name>substrate</name>
    </ligand>
</feature>
<feature type="binding site" evidence="1">
    <location>
        <begin position="182"/>
        <end position="183"/>
    </location>
    <ligand>
        <name>substrate</name>
    </ligand>
</feature>
<reference key="1">
    <citation type="journal article" date="2003" name="Proc. Natl. Acad. Sci. U.S.A.">
        <title>The genome sequence of Clostridium tetani, the causative agent of tetanus disease.</title>
        <authorList>
            <person name="Brueggemann H."/>
            <person name="Baeumer S."/>
            <person name="Fricke W.F."/>
            <person name="Wiezer A."/>
            <person name="Liesegang H."/>
            <person name="Decker I."/>
            <person name="Herzberg C."/>
            <person name="Martinez-Arias R."/>
            <person name="Merkl R."/>
            <person name="Henne A."/>
            <person name="Gottschalk G."/>
        </authorList>
    </citation>
    <scope>NUCLEOTIDE SEQUENCE [LARGE SCALE GENOMIC DNA]</scope>
    <source>
        <strain>Massachusetts / E88</strain>
    </source>
</reference>
<accession>Q891I4</accession>
<proteinExistence type="inferred from homology"/>
<name>IXTPA_CLOTE</name>